<organism>
    <name type="scientific">Pseudomonas aeruginosa (strain ATCC 15692 / DSM 22644 / CIP 104116 / JCM 14847 / LMG 12228 / 1C / PRS 101 / PAO1)</name>
    <dbReference type="NCBI Taxonomy" id="208964"/>
    <lineage>
        <taxon>Bacteria</taxon>
        <taxon>Pseudomonadati</taxon>
        <taxon>Pseudomonadota</taxon>
        <taxon>Gammaproteobacteria</taxon>
        <taxon>Pseudomonadales</taxon>
        <taxon>Pseudomonadaceae</taxon>
        <taxon>Pseudomonas</taxon>
    </lineage>
</organism>
<proteinExistence type="evidence at protein level"/>
<name>OPRJ_PSEAE</name>
<feature type="signal peptide" evidence="1">
    <location>
        <begin position="1"/>
        <end position="19"/>
    </location>
</feature>
<feature type="chain" id="PRO_0000030998" description="Outer membrane protein OprJ">
    <location>
        <begin position="20"/>
        <end position="479"/>
    </location>
</feature>
<feature type="region of interest" description="Disordered" evidence="2">
    <location>
        <begin position="102"/>
        <end position="121"/>
    </location>
</feature>
<feature type="lipid moiety-binding region" description="N-palmitoyl cysteine" evidence="3">
    <location>
        <position position="20"/>
    </location>
</feature>
<feature type="lipid moiety-binding region" description="S-diacylglycerol cysteine" evidence="3">
    <location>
        <position position="20"/>
    </location>
</feature>
<feature type="sequence conflict" description="In Ref. 1; AAB41958." evidence="3" ref="1">
    <original>N</original>
    <variation>I</variation>
    <location>
        <position position="74"/>
    </location>
</feature>
<feature type="sequence conflict" description="In Ref. 1; AAB41958." evidence="3" ref="1">
    <original>W</original>
    <variation>C</variation>
    <location>
        <position position="339"/>
    </location>
</feature>
<feature type="helix" evidence="4">
    <location>
        <begin position="54"/>
        <end position="57"/>
    </location>
</feature>
<feature type="helix" evidence="4">
    <location>
        <begin position="61"/>
        <end position="73"/>
    </location>
</feature>
<feature type="helix" evidence="4">
    <location>
        <begin position="75"/>
        <end position="98"/>
    </location>
</feature>
<feature type="strand" evidence="4">
    <location>
        <begin position="102"/>
        <end position="113"/>
    </location>
</feature>
<feature type="turn" evidence="4">
    <location>
        <begin position="115"/>
        <end position="117"/>
    </location>
</feature>
<feature type="strand" evidence="4">
    <location>
        <begin position="118"/>
        <end position="122"/>
    </location>
</feature>
<feature type="strand" evidence="4">
    <location>
        <begin position="124"/>
        <end position="140"/>
    </location>
</feature>
<feature type="helix" evidence="4">
    <location>
        <begin position="145"/>
        <end position="212"/>
    </location>
</feature>
<feature type="helix" evidence="4">
    <location>
        <begin position="217"/>
        <end position="252"/>
    </location>
</feature>
<feature type="helix" evidence="4">
    <location>
        <begin position="257"/>
        <end position="260"/>
    </location>
</feature>
<feature type="helix" evidence="4">
    <location>
        <begin position="280"/>
        <end position="286"/>
    </location>
</feature>
<feature type="helix" evidence="4">
    <location>
        <begin position="288"/>
        <end position="311"/>
    </location>
</feature>
<feature type="strand" evidence="4">
    <location>
        <begin position="314"/>
        <end position="327"/>
    </location>
</feature>
<feature type="helix" evidence="4">
    <location>
        <begin position="328"/>
        <end position="330"/>
    </location>
</feature>
<feature type="strand" evidence="4">
    <location>
        <begin position="331"/>
        <end position="333"/>
    </location>
</feature>
<feature type="strand" evidence="4">
    <location>
        <begin position="337"/>
        <end position="350"/>
    </location>
</feature>
<feature type="helix" evidence="4">
    <location>
        <begin position="355"/>
        <end position="421"/>
    </location>
</feature>
<feature type="helix" evidence="4">
    <location>
        <begin position="426"/>
        <end position="461"/>
    </location>
</feature>
<comment type="function">
    <text>Channel-forming component of a multidrug resistance efflux pump.</text>
</comment>
<comment type="subcellular location">
    <subcellularLocation>
        <location evidence="3">Cell outer membrane</location>
        <topology evidence="3">Lipid-anchor</topology>
    </subcellularLocation>
</comment>
<comment type="similarity">
    <text evidence="3">Belongs to the outer membrane factor (OMF) (TC 1.B.17) family.</text>
</comment>
<evidence type="ECO:0000255" key="1">
    <source>
        <dbReference type="PROSITE-ProRule" id="PRU00303"/>
    </source>
</evidence>
<evidence type="ECO:0000256" key="2">
    <source>
        <dbReference type="SAM" id="MobiDB-lite"/>
    </source>
</evidence>
<evidence type="ECO:0000305" key="3"/>
<evidence type="ECO:0007829" key="4">
    <source>
        <dbReference type="PDB" id="5AZS"/>
    </source>
</evidence>
<accession>Q51397</accession>
<dbReference type="EMBL" id="U57969">
    <property type="protein sequence ID" value="AAB41958.1"/>
    <property type="molecule type" value="Genomic_DNA"/>
</dbReference>
<dbReference type="EMBL" id="AE004091">
    <property type="protein sequence ID" value="AAG07985.1"/>
    <property type="molecule type" value="Genomic_DNA"/>
</dbReference>
<dbReference type="PIR" id="G83071">
    <property type="entry name" value="G83071"/>
</dbReference>
<dbReference type="RefSeq" id="NP_253287.1">
    <property type="nucleotide sequence ID" value="NC_002516.2"/>
</dbReference>
<dbReference type="RefSeq" id="WP_003112802.1">
    <property type="nucleotide sequence ID" value="NZ_QZGE01000004.1"/>
</dbReference>
<dbReference type="PDB" id="5AZS">
    <property type="method" value="X-ray"/>
    <property type="resolution" value="3.10 A"/>
    <property type="chains" value="A/B/C=20-479"/>
</dbReference>
<dbReference type="PDBsum" id="5AZS"/>
<dbReference type="SMR" id="Q51397"/>
<dbReference type="FunCoup" id="Q51397">
    <property type="interactions" value="298"/>
</dbReference>
<dbReference type="STRING" id="208964.PA4597"/>
<dbReference type="TCDB" id="2.A.6.2.15">
    <property type="family name" value="the resistance-nodulation-cell division (rnd) superfamily"/>
</dbReference>
<dbReference type="PaxDb" id="208964-PA4597"/>
<dbReference type="GeneID" id="881070"/>
<dbReference type="KEGG" id="pae:PA4597"/>
<dbReference type="PATRIC" id="fig|208964.12.peg.4812"/>
<dbReference type="PseudoCAP" id="PA4597"/>
<dbReference type="HOGENOM" id="CLU_012817_13_3_6"/>
<dbReference type="InParanoid" id="Q51397"/>
<dbReference type="OrthoDB" id="9770517at2"/>
<dbReference type="PhylomeDB" id="Q51397"/>
<dbReference type="BioCyc" id="PAER208964:G1FZ6-4691-MONOMER"/>
<dbReference type="Proteomes" id="UP000002438">
    <property type="component" value="Chromosome"/>
</dbReference>
<dbReference type="GO" id="GO:0009279">
    <property type="term" value="C:cell outer membrane"/>
    <property type="evidence" value="ECO:0007669"/>
    <property type="project" value="UniProtKB-SubCell"/>
</dbReference>
<dbReference type="GO" id="GO:0016020">
    <property type="term" value="C:membrane"/>
    <property type="evidence" value="ECO:0000318"/>
    <property type="project" value="GO_Central"/>
</dbReference>
<dbReference type="GO" id="GO:0015562">
    <property type="term" value="F:efflux transmembrane transporter activity"/>
    <property type="evidence" value="ECO:0007669"/>
    <property type="project" value="InterPro"/>
</dbReference>
<dbReference type="GO" id="GO:0022857">
    <property type="term" value="F:transmembrane transporter activity"/>
    <property type="evidence" value="ECO:0000318"/>
    <property type="project" value="GO_Central"/>
</dbReference>
<dbReference type="GO" id="GO:0046677">
    <property type="term" value="P:response to antibiotic"/>
    <property type="evidence" value="ECO:0007669"/>
    <property type="project" value="UniProtKB-KW"/>
</dbReference>
<dbReference type="GO" id="GO:0055085">
    <property type="term" value="P:transmembrane transport"/>
    <property type="evidence" value="ECO:0000318"/>
    <property type="project" value="GO_Central"/>
</dbReference>
<dbReference type="Gene3D" id="1.20.1600.10">
    <property type="entry name" value="Outer membrane efflux proteins (OEP)"/>
    <property type="match status" value="1"/>
</dbReference>
<dbReference type="Gene3D" id="2.20.200.10">
    <property type="entry name" value="Outer membrane efflux proteins (OEP)"/>
    <property type="match status" value="1"/>
</dbReference>
<dbReference type="InterPro" id="IPR050737">
    <property type="entry name" value="OMF"/>
</dbReference>
<dbReference type="InterPro" id="IPR003423">
    <property type="entry name" value="OMP_efflux"/>
</dbReference>
<dbReference type="InterPro" id="IPR010131">
    <property type="entry name" value="RND_efflux_OM_lipoprot_NodT"/>
</dbReference>
<dbReference type="NCBIfam" id="TIGR01845">
    <property type="entry name" value="outer_NodT"/>
    <property type="match status" value="1"/>
</dbReference>
<dbReference type="PANTHER" id="PTHR30203:SF32">
    <property type="entry name" value="CATION EFFLUX SYSTEM PROTEIN CUSC"/>
    <property type="match status" value="1"/>
</dbReference>
<dbReference type="PANTHER" id="PTHR30203">
    <property type="entry name" value="OUTER MEMBRANE CATION EFFLUX PROTEIN"/>
    <property type="match status" value="1"/>
</dbReference>
<dbReference type="Pfam" id="PF02321">
    <property type="entry name" value="OEP"/>
    <property type="match status" value="2"/>
</dbReference>
<dbReference type="SUPFAM" id="SSF56954">
    <property type="entry name" value="Outer membrane efflux proteins (OEP)"/>
    <property type="match status" value="1"/>
</dbReference>
<dbReference type="PROSITE" id="PS51257">
    <property type="entry name" value="PROKAR_LIPOPROTEIN"/>
    <property type="match status" value="1"/>
</dbReference>
<keyword id="KW-0002">3D-structure</keyword>
<keyword id="KW-0046">Antibiotic resistance</keyword>
<keyword id="KW-0998">Cell outer membrane</keyword>
<keyword id="KW-0449">Lipoprotein</keyword>
<keyword id="KW-0472">Membrane</keyword>
<keyword id="KW-0564">Palmitate</keyword>
<keyword id="KW-1185">Reference proteome</keyword>
<keyword id="KW-0732">Signal</keyword>
<keyword id="KW-0812">Transmembrane</keyword>
<keyword id="KW-1134">Transmembrane beta strand</keyword>
<reference key="1">
    <citation type="journal article" date="1996" name="Mol. Microbiol.">
        <title>Overexpression of the mexC-mexD-oprJ efflux operon in nfxB-type multidrug-resistant strains of Pseudomonas aeruginosa.</title>
        <authorList>
            <person name="Poole K."/>
            <person name="Gotoh N."/>
            <person name="Tsujimoto H."/>
            <person name="Zhao Q."/>
            <person name="Wada A."/>
            <person name="Yamasaki T."/>
            <person name="Neshat S."/>
            <person name="Yamagishi J."/>
            <person name="Li X.Z."/>
            <person name="Nishino T."/>
        </authorList>
    </citation>
    <scope>NUCLEOTIDE SEQUENCE [GENOMIC DNA]</scope>
    <source>
        <strain>PAO</strain>
    </source>
</reference>
<reference key="2">
    <citation type="journal article" date="2000" name="Nature">
        <title>Complete genome sequence of Pseudomonas aeruginosa PAO1, an opportunistic pathogen.</title>
        <authorList>
            <person name="Stover C.K."/>
            <person name="Pham X.-Q.T."/>
            <person name="Erwin A.L."/>
            <person name="Mizoguchi S.D."/>
            <person name="Warrener P."/>
            <person name="Hickey M.J."/>
            <person name="Brinkman F.S.L."/>
            <person name="Hufnagle W.O."/>
            <person name="Kowalik D.J."/>
            <person name="Lagrou M."/>
            <person name="Garber R.L."/>
            <person name="Goltry L."/>
            <person name="Tolentino E."/>
            <person name="Westbrock-Wadman S."/>
            <person name="Yuan Y."/>
            <person name="Brody L.L."/>
            <person name="Coulter S.N."/>
            <person name="Folger K.R."/>
            <person name="Kas A."/>
            <person name="Larbig K."/>
            <person name="Lim R.M."/>
            <person name="Smith K.A."/>
            <person name="Spencer D.H."/>
            <person name="Wong G.K.-S."/>
            <person name="Wu Z."/>
            <person name="Paulsen I.T."/>
            <person name="Reizer J."/>
            <person name="Saier M.H. Jr."/>
            <person name="Hancock R.E.W."/>
            <person name="Lory S."/>
            <person name="Olson M.V."/>
        </authorList>
    </citation>
    <scope>NUCLEOTIDE SEQUENCE [LARGE SCALE GENOMIC DNA]</scope>
    <source>
        <strain>ATCC 15692 / DSM 22644 / CIP 104116 / JCM 14847 / LMG 12228 / 1C / PRS 101 / PAO1</strain>
    </source>
</reference>
<sequence length="479" mass="51958">MRKPAFGVSALLIALTLGACSMAPTYERPAAPVADSWSGAAAQRQGAAIDTLDWKSFIVDAELRRLVDMALDNNRSLRQTLLDIEAARAQYRIQRADRVPGLNAAATGNRQRQPADLSAGNRSEVASSYQVGLALPEYELDLFGRVKSLTDAALQQYLASEEAARAARIALVAEVSQAYLSYDGALRRLALTRQTLVSREYSFALIDQRRAAGAATALDYQEALGLVEQARAEQERNLRQKQQAFNALVLLLGSDDAAQAIPRSPGQRPKLLQDIAPGTPSELIERRPDILAAEHRLRARNADIGAARAAFFPRISLTGSFGTSSAEMSGLFDGGSRSWSFLPTLTLPIFDGGRNRANLSLAEARKDSAVAAYEGTIQTAFREVADALAASDTLRREEKALRALANSSNEALKLAKARYESGVDNHLRYLDAQRSSFLNEIAFIDGSTQRQIALVDLFRALGGGWDEGRSLVVHRGGRS</sequence>
<protein>
    <recommendedName>
        <fullName>Outer membrane protein OprJ</fullName>
    </recommendedName>
</protein>
<gene>
    <name type="primary">oprJ</name>
    <name type="ordered locus">PA4597</name>
</gene>